<reference key="1">
    <citation type="journal article" date="1997" name="J. Biotechnol.">
        <title>Cloning and sequencing of an alpha-glucosidase gene from Aspergillus niger and its expression in A. nidulans.</title>
        <authorList>
            <person name="Nakamura A."/>
            <person name="Nishimura I."/>
            <person name="Yokoyama A."/>
            <person name="Lee D.-G."/>
            <person name="Hidaka M."/>
            <person name="Masaki H."/>
            <person name="Kimura A."/>
            <person name="Chiba S."/>
            <person name="Uozumi T."/>
        </authorList>
    </citation>
    <scope>NUCLEOTIDE SEQUENCE [GENOMIC DNA]</scope>
    <source>
        <strain>GN-3</strain>
    </source>
</reference>
<reference key="2">
    <citation type="journal article" date="1992" name="Biosci. Biotechnol. Biochem.">
        <title>Complete amino acid sequence of crystalline alpha-glucosidase from Aspergillus niger.</title>
        <authorList>
            <person name="Kimura A."/>
            <person name="Takata M."/>
            <person name="Sakai O."/>
            <person name="Matsui H."/>
            <person name="Takai N."/>
            <person name="Takayanagi T."/>
            <person name="Nishimua I."/>
            <person name="Uozumi T."/>
            <person name="Chiba S."/>
        </authorList>
    </citation>
    <scope>PROTEIN SEQUENCE OF 26-252 AND 267-985</scope>
    <scope>GLYCOSYLATION AT THR-36; ASN-124; ASN-143; ASN-218; ASN-347; ASN-422; ASN-506; ASN-534; SER-545; SER-550; THR-559; SER-560; THR-561; SER-562; THR-571; ASN-601; ASN-623; ASN-835; ASN-881; SER-895; ASN-899; ASN-957 AND ASN-970</scope>
    <source>
        <strain>GN-8</strain>
    </source>
</reference>
<proteinExistence type="evidence at protein level"/>
<keyword id="KW-0903">Direct protein sequencing</keyword>
<keyword id="KW-0325">Glycoprotein</keyword>
<keyword id="KW-0326">Glycosidase</keyword>
<keyword id="KW-0378">Hydrolase</keyword>
<keyword id="KW-0732">Signal</keyword>
<feature type="signal peptide" evidence="2">
    <location>
        <begin position="1"/>
        <end position="25"/>
    </location>
</feature>
<feature type="chain" id="PRO_0000018576" description="Alpha-glucosidase">
    <location>
        <begin position="26"/>
        <end position="985"/>
    </location>
</feature>
<feature type="active site" description="Nucleophile">
    <location>
        <position position="490"/>
    </location>
</feature>
<feature type="active site" evidence="1">
    <location>
        <position position="493"/>
    </location>
</feature>
<feature type="active site" description="Proton donor" evidence="1">
    <location>
        <position position="660"/>
    </location>
</feature>
<feature type="glycosylation site" description="O-linked (Man) threonine" evidence="4">
    <location>
        <position position="36"/>
    </location>
</feature>
<feature type="glycosylation site" description="N-linked (GlcNAc...) asparagine" evidence="2">
    <location>
        <position position="124"/>
    </location>
</feature>
<feature type="glycosylation site" description="N-linked (GlcNAc...) asparagine" evidence="2">
    <location>
        <position position="143"/>
    </location>
</feature>
<feature type="glycosylation site" description="N-linked (GlcNAc...) asparagine" evidence="2">
    <location>
        <position position="218"/>
    </location>
</feature>
<feature type="glycosylation site" description="N-linked (GlcNAc...) asparagine" evidence="2">
    <location>
        <position position="347"/>
    </location>
</feature>
<feature type="glycosylation site" description="N-linked (GlcNAc...) asparagine" evidence="2">
    <location>
        <position position="422"/>
    </location>
</feature>
<feature type="glycosylation site" description="N-linked (GlcNAc...) asparagine" evidence="2">
    <location>
        <position position="506"/>
    </location>
</feature>
<feature type="glycosylation site" description="N-linked (GlcNAc...) asparagine" evidence="2">
    <location>
        <position position="534"/>
    </location>
</feature>
<feature type="glycosylation site" description="N-linked (GlcNAc...) asparagine">
    <location>
        <position position="537"/>
    </location>
</feature>
<feature type="glycosylation site" description="O-linked (Man) serine" evidence="4">
    <location>
        <position position="545"/>
    </location>
</feature>
<feature type="glycosylation site" description="O-linked (Man) serine" evidence="4">
    <location>
        <position position="550"/>
    </location>
</feature>
<feature type="glycosylation site" description="O-linked (Man) threonine" evidence="4">
    <location>
        <position position="559"/>
    </location>
</feature>
<feature type="glycosylation site" description="O-linked (Man) serine" evidence="4">
    <location>
        <position position="560"/>
    </location>
</feature>
<feature type="glycosylation site" description="O-linked (Man) threonine" evidence="4">
    <location>
        <position position="561"/>
    </location>
</feature>
<feature type="glycosylation site" description="O-linked (Man) serine" evidence="4">
    <location>
        <position position="562"/>
    </location>
</feature>
<feature type="glycosylation site" description="O-linked (Man) threonine" evidence="4">
    <location>
        <position position="571"/>
    </location>
</feature>
<feature type="glycosylation site" description="N-linked (GlcNAc...) asparagine" evidence="2">
    <location>
        <position position="601"/>
    </location>
</feature>
<feature type="glycosylation site" description="N-linked (GlcNAc...) asparagine" evidence="2">
    <location>
        <position position="623"/>
    </location>
</feature>
<feature type="glycosylation site" description="N-linked (GlcNAc...) asparagine" evidence="2">
    <location>
        <position position="835"/>
    </location>
</feature>
<feature type="glycosylation site" description="N-linked (GlcNAc...) asparagine" evidence="2">
    <location>
        <position position="881"/>
    </location>
</feature>
<feature type="glycosylation site" description="O-linked (Man) serine" evidence="4">
    <location>
        <position position="895"/>
    </location>
</feature>
<feature type="glycosylation site" description="N-linked (GlcNAc...) asparagine" evidence="2">
    <location>
        <position position="899"/>
    </location>
</feature>
<feature type="glycosylation site" description="N-linked (GlcNAc...) asparagine" evidence="2">
    <location>
        <position position="957"/>
    </location>
</feature>
<feature type="glycosylation site" description="N-linked (GlcNAc...) asparagine" evidence="2">
    <location>
        <position position="970"/>
    </location>
</feature>
<feature type="sequence variant" description="In strain: GN-8.">
    <original>TT</original>
    <variation>LL</variation>
    <location>
        <begin position="27"/>
        <end position="28"/>
    </location>
</feature>
<feature type="sequence variant" description="In strain: GN-8.">
    <original>D</original>
    <variation>A</variation>
    <location>
        <position position="42"/>
    </location>
</feature>
<feature type="sequence variant" description="In strain: GN-8.">
    <original>N</original>
    <variation>M</variation>
    <location>
        <position position="929"/>
    </location>
</feature>
<protein>
    <recommendedName>
        <fullName>Alpha-glucosidase</fullName>
        <ecNumber>3.2.1.20</ecNumber>
    </recommendedName>
    <alternativeName>
        <fullName>Maltase</fullName>
    </alternativeName>
</protein>
<gene>
    <name type="primary">aglA</name>
</gene>
<sequence length="985" mass="108913">MVKLTHLLARAWLVPLAYGASQSLLSTTAPSQPQFTIPASADVGAQLIANIDDPQAADAQSVCPGYKASKVQHNSRGFTASLQLAGRPCNVYGTDVESLTLSVEYQDSDRLNIQILPTHVDSTNASWYFLSENLVPRPKASLNASVSQSDLFVSWSNEPSFNFKVIRKATGDALFSTEGTVLVYENQFIEFVTALPEEYNLYGLGEHITQFRLQRNANLTIYPSDDGTPIDQNLYGQHPFYLDTRYYKGDRQNGSYIPVKSSEADASQDYISLSHGVFLRNSHGLEILLRSQKLIWRTLGGGIDLTFYSGPAPADVTRQYLTSTVGLPAMQQYNTLGFHQCRWGYNNWSDLADVVANFEKFEIPLEYIWTDIDYMHGYRNFDNDQHRFSYSEGDEFLSKLHESGRYYVPIVDAALYIPNPENASDAYATYDRGAADDVFLKNPDGSLYIGAVWPGYTVFPDWHHPKAVDFWANELVIWSKKVAFDGVWYDMSEVSSFCVGSCGTGNLTLNPAHPSFLLPGEPGDIIYDYPEAFNITNATEAASASAGASSQAAATATTTSTSVSYLRTTPTPGVRNVEHPPYVINHDQEGHDLSVHAVSPNATHVDGVEEYDVHGLYGHQGLNATYQGLLEVWSHKRRPFIIGRSTFAGSGKWAGHWGGDNYSKWWSMYYSISQALSFSLFGIPMFGADTCGFNGNSDEELCNRWMQLSAFFPFYRNHNELSTIPQEPYRWASVIEATKSAMRIRYAILPYFYTLFDLAHTTGSTVMRALSWEFPNDPTLAAVETQFMVGPAIMVVPVLEPLVNTVKGVFPGVGHGEVWYDWYTQAAVDAKPGVNTTISAPLGHIPVYVRGGNILPMQEPALTTREARQTPWALLAALGSNGTASGQLYLDDGESIYPNATLHVDFTASRSSLRSSAQGRWKERNPLANVTVLGVNKEPSAVTLNGQAVFPGSVTYNSTSQVLFVGGLQNLTKGGAWAENWVLEW</sequence>
<name>AGLU_ASPNG</name>
<comment type="function">
    <text>Hydrolyzes malto-oligosaccharides, but has a low activity toward soluble starch.</text>
</comment>
<comment type="catalytic activity">
    <reaction>
        <text>Hydrolysis of terminal, non-reducing (1-&gt;4)-linked alpha-D-glucose residues with release of alpha-D-glucose.</text>
        <dbReference type="EC" id="3.2.1.20"/>
    </reaction>
</comment>
<comment type="PTM">
    <text evidence="2">The O-linked saccharide is not identified, but is probably mannose.</text>
</comment>
<comment type="similarity">
    <text evidence="3">Belongs to the glycosyl hydrolase 31 family.</text>
</comment>
<dbReference type="EC" id="3.2.1.20"/>
<dbReference type="EMBL" id="D45356">
    <property type="protein sequence ID" value="BAA23616.1"/>
    <property type="molecule type" value="Genomic_DNA"/>
</dbReference>
<dbReference type="PIR" id="JC1199">
    <property type="entry name" value="JC1199"/>
</dbReference>
<dbReference type="PIR" id="JC1200">
    <property type="entry name" value="JC1200"/>
</dbReference>
<dbReference type="PIR" id="JC5561">
    <property type="entry name" value="JC5561"/>
</dbReference>
<dbReference type="SMR" id="P56526"/>
<dbReference type="BindingDB" id="P56526"/>
<dbReference type="ChEMBL" id="CHEMBL3435"/>
<dbReference type="DrugCentral" id="P56526"/>
<dbReference type="CAZy" id="GH31">
    <property type="family name" value="Glycoside Hydrolase Family 31"/>
</dbReference>
<dbReference type="GlyConnect" id="43">
    <property type="glycosylation" value="7 N-Linked glycans"/>
</dbReference>
<dbReference type="GlyCosmos" id="P56526">
    <property type="glycosylation" value="24 sites, 11 glycans"/>
</dbReference>
<dbReference type="iPTMnet" id="P56526"/>
<dbReference type="PaxDb" id="5061-CADANGAP00004308"/>
<dbReference type="EnsemblFungi" id="CAK44692">
    <property type="protein sequence ID" value="CAK44692"/>
    <property type="gene ID" value="An04g06920"/>
</dbReference>
<dbReference type="KEGG" id="ang:An04g06920"/>
<dbReference type="VEuPathDB" id="FungiDB:An04g06920"/>
<dbReference type="VEuPathDB" id="FungiDB:ASPNIDRAFT2_1146704"/>
<dbReference type="VEuPathDB" id="FungiDB:ATCC64974_81710"/>
<dbReference type="VEuPathDB" id="FungiDB:M747DRAFT_360506"/>
<dbReference type="eggNOG" id="KOG1065">
    <property type="taxonomic scope" value="Eukaryota"/>
</dbReference>
<dbReference type="OrthoDB" id="5839090at2759"/>
<dbReference type="BRENDA" id="3.2.1.20">
    <property type="organism ID" value="518"/>
</dbReference>
<dbReference type="GO" id="GO:0004558">
    <property type="term" value="F:alpha-1,4-glucosidase activity"/>
    <property type="evidence" value="ECO:0000314"/>
    <property type="project" value="AspGD"/>
</dbReference>
<dbReference type="GO" id="GO:0030246">
    <property type="term" value="F:carbohydrate binding"/>
    <property type="evidence" value="ECO:0007669"/>
    <property type="project" value="InterPro"/>
</dbReference>
<dbReference type="GO" id="GO:0005975">
    <property type="term" value="P:carbohydrate metabolic process"/>
    <property type="evidence" value="ECO:0007669"/>
    <property type="project" value="InterPro"/>
</dbReference>
<dbReference type="CDD" id="cd06602">
    <property type="entry name" value="GH31_MGAM_SI_GAA"/>
    <property type="match status" value="1"/>
</dbReference>
<dbReference type="CDD" id="cd14752">
    <property type="entry name" value="GH31_N"/>
    <property type="match status" value="1"/>
</dbReference>
<dbReference type="FunFam" id="2.60.40.1180:FF:000001">
    <property type="entry name" value="Maltase-glucoamylase, intestinal"/>
    <property type="match status" value="1"/>
</dbReference>
<dbReference type="FunFam" id="2.60.40.1180:FF:000005">
    <property type="entry name" value="Maltase-glucoamylase, intestinal"/>
    <property type="match status" value="1"/>
</dbReference>
<dbReference type="FunFam" id="2.60.40.1760:FF:000005">
    <property type="entry name" value="Putative alpha-glucosidase AgdA"/>
    <property type="match status" value="1"/>
</dbReference>
<dbReference type="FunFam" id="3.20.20.80:FF:000138">
    <property type="entry name" value="Putative alpha-glucosidase AgdA"/>
    <property type="match status" value="1"/>
</dbReference>
<dbReference type="FunFam" id="3.20.20.80:FF:000169">
    <property type="entry name" value="Putative alpha-glucosidase AgdA"/>
    <property type="match status" value="1"/>
</dbReference>
<dbReference type="Gene3D" id="3.20.20.80">
    <property type="entry name" value="Glycosidases"/>
    <property type="match status" value="1"/>
</dbReference>
<dbReference type="Gene3D" id="2.60.40.1760">
    <property type="entry name" value="glycosyl hydrolase (family 31)"/>
    <property type="match status" value="1"/>
</dbReference>
<dbReference type="Gene3D" id="2.60.40.1180">
    <property type="entry name" value="Golgi alpha-mannosidase II"/>
    <property type="match status" value="2"/>
</dbReference>
<dbReference type="InterPro" id="IPR011013">
    <property type="entry name" value="Gal_mutarotase_sf_dom"/>
</dbReference>
<dbReference type="InterPro" id="IPR030458">
    <property type="entry name" value="Glyco_hydro_31_AS"/>
</dbReference>
<dbReference type="InterPro" id="IPR048395">
    <property type="entry name" value="Glyco_hydro_31_C"/>
</dbReference>
<dbReference type="InterPro" id="IPR030459">
    <property type="entry name" value="Glyco_hydro_31_CS"/>
</dbReference>
<dbReference type="InterPro" id="IPR025887">
    <property type="entry name" value="Glyco_hydro_31_N_dom"/>
</dbReference>
<dbReference type="InterPro" id="IPR000322">
    <property type="entry name" value="Glyco_hydro_31_TIM"/>
</dbReference>
<dbReference type="InterPro" id="IPR013780">
    <property type="entry name" value="Glyco_hydro_b"/>
</dbReference>
<dbReference type="InterPro" id="IPR017853">
    <property type="entry name" value="Glycoside_hydrolase_SF"/>
</dbReference>
<dbReference type="PANTHER" id="PTHR22762">
    <property type="entry name" value="ALPHA-GLUCOSIDASE"/>
    <property type="match status" value="1"/>
</dbReference>
<dbReference type="PANTHER" id="PTHR22762:SF133">
    <property type="entry name" value="P-TYPE DOMAIN-CONTAINING PROTEIN"/>
    <property type="match status" value="1"/>
</dbReference>
<dbReference type="Pfam" id="PF13802">
    <property type="entry name" value="Gal_mutarotas_2"/>
    <property type="match status" value="1"/>
</dbReference>
<dbReference type="Pfam" id="PF01055">
    <property type="entry name" value="Glyco_hydro_31_2nd"/>
    <property type="match status" value="1"/>
</dbReference>
<dbReference type="Pfam" id="PF21365">
    <property type="entry name" value="Glyco_hydro_31_3rd"/>
    <property type="match status" value="1"/>
</dbReference>
<dbReference type="SUPFAM" id="SSF51445">
    <property type="entry name" value="(Trans)glycosidases"/>
    <property type="match status" value="1"/>
</dbReference>
<dbReference type="SUPFAM" id="SSF74650">
    <property type="entry name" value="Galactose mutarotase-like"/>
    <property type="match status" value="1"/>
</dbReference>
<dbReference type="SUPFAM" id="SSF51011">
    <property type="entry name" value="Glycosyl hydrolase domain"/>
    <property type="match status" value="1"/>
</dbReference>
<dbReference type="PROSITE" id="PS00129">
    <property type="entry name" value="GLYCOSYL_HYDROL_F31_1"/>
    <property type="match status" value="1"/>
</dbReference>
<dbReference type="PROSITE" id="PS00707">
    <property type="entry name" value="GLYCOSYL_HYDROL_F31_2"/>
    <property type="match status" value="1"/>
</dbReference>
<evidence type="ECO:0000250" key="1"/>
<evidence type="ECO:0000269" key="2">
    <source>
    </source>
</evidence>
<evidence type="ECO:0000305" key="3"/>
<evidence type="ECO:0000305" key="4">
    <source>
    </source>
</evidence>
<accession>P56526</accession>
<accession>O13451</accession>
<organism>
    <name type="scientific">Aspergillus niger</name>
    <dbReference type="NCBI Taxonomy" id="5061"/>
    <lineage>
        <taxon>Eukaryota</taxon>
        <taxon>Fungi</taxon>
        <taxon>Dikarya</taxon>
        <taxon>Ascomycota</taxon>
        <taxon>Pezizomycotina</taxon>
        <taxon>Eurotiomycetes</taxon>
        <taxon>Eurotiomycetidae</taxon>
        <taxon>Eurotiales</taxon>
        <taxon>Aspergillaceae</taxon>
        <taxon>Aspergillus</taxon>
        <taxon>Aspergillus subgen. Circumdati</taxon>
    </lineage>
</organism>